<reference key="1">
    <citation type="submission" date="2008-04" db="EMBL/GenBank/DDBJ databases">
        <title>Complete sequence of Yersinia pseudotuberculosis PB1/+.</title>
        <authorList>
            <person name="Copeland A."/>
            <person name="Lucas S."/>
            <person name="Lapidus A."/>
            <person name="Glavina del Rio T."/>
            <person name="Dalin E."/>
            <person name="Tice H."/>
            <person name="Bruce D."/>
            <person name="Goodwin L."/>
            <person name="Pitluck S."/>
            <person name="Munk A.C."/>
            <person name="Brettin T."/>
            <person name="Detter J.C."/>
            <person name="Han C."/>
            <person name="Tapia R."/>
            <person name="Schmutz J."/>
            <person name="Larimer F."/>
            <person name="Land M."/>
            <person name="Hauser L."/>
            <person name="Challacombe J.F."/>
            <person name="Green L."/>
            <person name="Lindler L.E."/>
            <person name="Nikolich M.P."/>
            <person name="Richardson P."/>
        </authorList>
    </citation>
    <scope>NUCLEOTIDE SEQUENCE [LARGE SCALE GENOMIC DNA]</scope>
    <source>
        <strain>PB1/+</strain>
    </source>
</reference>
<organism>
    <name type="scientific">Yersinia pseudotuberculosis serotype IB (strain PB1/+)</name>
    <dbReference type="NCBI Taxonomy" id="502801"/>
    <lineage>
        <taxon>Bacteria</taxon>
        <taxon>Pseudomonadati</taxon>
        <taxon>Pseudomonadota</taxon>
        <taxon>Gammaproteobacteria</taxon>
        <taxon>Enterobacterales</taxon>
        <taxon>Yersiniaceae</taxon>
        <taxon>Yersinia</taxon>
    </lineage>
</organism>
<accession>B2K665</accession>
<evidence type="ECO:0000255" key="1">
    <source>
        <dbReference type="HAMAP-Rule" id="MF_00382"/>
    </source>
</evidence>
<evidence type="ECO:0000305" key="2"/>
<feature type="chain" id="PRO_1000122397" description="Large ribosomal subunit protein bL20">
    <location>
        <begin position="1"/>
        <end position="118"/>
    </location>
</feature>
<proteinExistence type="inferred from homology"/>
<sequence length="118" mass="13511">MARVKRGVIARARHKKILKQAKGYYGARSRVYRVAFQAVIKAGQYAYRDRRQRKRQFRQLWIARINAAARQNGLSYSRFINGLKKASVEIDRKILADIAVFDKVAFSALVEKAKAALA</sequence>
<gene>
    <name evidence="1" type="primary">rplT</name>
    <name type="ordered locus">YPTS_2413</name>
</gene>
<keyword id="KW-0687">Ribonucleoprotein</keyword>
<keyword id="KW-0689">Ribosomal protein</keyword>
<keyword id="KW-0694">RNA-binding</keyword>
<keyword id="KW-0699">rRNA-binding</keyword>
<dbReference type="EMBL" id="CP001048">
    <property type="protein sequence ID" value="ACC89374.1"/>
    <property type="molecule type" value="Genomic_DNA"/>
</dbReference>
<dbReference type="RefSeq" id="WP_002211833.1">
    <property type="nucleotide sequence ID" value="NZ_CP009780.1"/>
</dbReference>
<dbReference type="SMR" id="B2K665"/>
<dbReference type="GeneID" id="96665819"/>
<dbReference type="KEGG" id="ypb:YPTS_2413"/>
<dbReference type="PATRIC" id="fig|502801.10.peg.1820"/>
<dbReference type="GO" id="GO:1990904">
    <property type="term" value="C:ribonucleoprotein complex"/>
    <property type="evidence" value="ECO:0007669"/>
    <property type="project" value="UniProtKB-KW"/>
</dbReference>
<dbReference type="GO" id="GO:0005840">
    <property type="term" value="C:ribosome"/>
    <property type="evidence" value="ECO:0007669"/>
    <property type="project" value="UniProtKB-KW"/>
</dbReference>
<dbReference type="GO" id="GO:0019843">
    <property type="term" value="F:rRNA binding"/>
    <property type="evidence" value="ECO:0007669"/>
    <property type="project" value="UniProtKB-UniRule"/>
</dbReference>
<dbReference type="GO" id="GO:0003735">
    <property type="term" value="F:structural constituent of ribosome"/>
    <property type="evidence" value="ECO:0007669"/>
    <property type="project" value="InterPro"/>
</dbReference>
<dbReference type="GO" id="GO:0000027">
    <property type="term" value="P:ribosomal large subunit assembly"/>
    <property type="evidence" value="ECO:0007669"/>
    <property type="project" value="UniProtKB-UniRule"/>
</dbReference>
<dbReference type="GO" id="GO:0006412">
    <property type="term" value="P:translation"/>
    <property type="evidence" value="ECO:0007669"/>
    <property type="project" value="InterPro"/>
</dbReference>
<dbReference type="CDD" id="cd07026">
    <property type="entry name" value="Ribosomal_L20"/>
    <property type="match status" value="1"/>
</dbReference>
<dbReference type="FunFam" id="1.10.1900.20:FF:000001">
    <property type="entry name" value="50S ribosomal protein L20"/>
    <property type="match status" value="1"/>
</dbReference>
<dbReference type="Gene3D" id="6.10.160.10">
    <property type="match status" value="1"/>
</dbReference>
<dbReference type="Gene3D" id="1.10.1900.20">
    <property type="entry name" value="Ribosomal protein L20"/>
    <property type="match status" value="1"/>
</dbReference>
<dbReference type="HAMAP" id="MF_00382">
    <property type="entry name" value="Ribosomal_bL20"/>
    <property type="match status" value="1"/>
</dbReference>
<dbReference type="InterPro" id="IPR005813">
    <property type="entry name" value="Ribosomal_bL20"/>
</dbReference>
<dbReference type="InterPro" id="IPR049946">
    <property type="entry name" value="RIBOSOMAL_L20_CS"/>
</dbReference>
<dbReference type="InterPro" id="IPR035566">
    <property type="entry name" value="Ribosomal_protein_bL20_C"/>
</dbReference>
<dbReference type="NCBIfam" id="TIGR01032">
    <property type="entry name" value="rplT_bact"/>
    <property type="match status" value="1"/>
</dbReference>
<dbReference type="PANTHER" id="PTHR10986">
    <property type="entry name" value="39S RIBOSOMAL PROTEIN L20"/>
    <property type="match status" value="1"/>
</dbReference>
<dbReference type="Pfam" id="PF00453">
    <property type="entry name" value="Ribosomal_L20"/>
    <property type="match status" value="1"/>
</dbReference>
<dbReference type="PRINTS" id="PR00062">
    <property type="entry name" value="RIBOSOMALL20"/>
</dbReference>
<dbReference type="SUPFAM" id="SSF74731">
    <property type="entry name" value="Ribosomal protein L20"/>
    <property type="match status" value="1"/>
</dbReference>
<dbReference type="PROSITE" id="PS00937">
    <property type="entry name" value="RIBOSOMAL_L20"/>
    <property type="match status" value="1"/>
</dbReference>
<name>RL20_YERPB</name>
<comment type="function">
    <text evidence="1">Binds directly to 23S ribosomal RNA and is necessary for the in vitro assembly process of the 50S ribosomal subunit. It is not involved in the protein synthesizing functions of that subunit.</text>
</comment>
<comment type="similarity">
    <text evidence="1">Belongs to the bacterial ribosomal protein bL20 family.</text>
</comment>
<protein>
    <recommendedName>
        <fullName evidence="1">Large ribosomal subunit protein bL20</fullName>
    </recommendedName>
    <alternativeName>
        <fullName evidence="2">50S ribosomal protein L20</fullName>
    </alternativeName>
</protein>